<evidence type="ECO:0000255" key="1">
    <source>
        <dbReference type="HAMAP-Rule" id="MF_00044"/>
    </source>
</evidence>
<organism>
    <name type="scientific">Carboxydothermus hydrogenoformans (strain ATCC BAA-161 / DSM 6008 / Z-2901)</name>
    <dbReference type="NCBI Taxonomy" id="246194"/>
    <lineage>
        <taxon>Bacteria</taxon>
        <taxon>Bacillati</taxon>
        <taxon>Bacillota</taxon>
        <taxon>Clostridia</taxon>
        <taxon>Thermoanaerobacterales</taxon>
        <taxon>Thermoanaerobacteraceae</taxon>
        <taxon>Carboxydothermus</taxon>
    </lineage>
</organism>
<dbReference type="EC" id="6.1.1.23" evidence="1"/>
<dbReference type="EMBL" id="CP000141">
    <property type="protein sequence ID" value="ABB14803.1"/>
    <property type="molecule type" value="Genomic_DNA"/>
</dbReference>
<dbReference type="RefSeq" id="WP_011345090.1">
    <property type="nucleotide sequence ID" value="NC_007503.1"/>
</dbReference>
<dbReference type="SMR" id="Q3AA17"/>
<dbReference type="FunCoup" id="Q3AA17">
    <property type="interactions" value="435"/>
</dbReference>
<dbReference type="STRING" id="246194.CHY_2204"/>
<dbReference type="KEGG" id="chy:CHY_2204"/>
<dbReference type="eggNOG" id="COG0173">
    <property type="taxonomic scope" value="Bacteria"/>
</dbReference>
<dbReference type="HOGENOM" id="CLU_014330_3_2_9"/>
<dbReference type="InParanoid" id="Q3AA17"/>
<dbReference type="Proteomes" id="UP000002706">
    <property type="component" value="Chromosome"/>
</dbReference>
<dbReference type="GO" id="GO:0005737">
    <property type="term" value="C:cytoplasm"/>
    <property type="evidence" value="ECO:0007669"/>
    <property type="project" value="UniProtKB-SubCell"/>
</dbReference>
<dbReference type="GO" id="GO:0004815">
    <property type="term" value="F:aspartate-tRNA ligase activity"/>
    <property type="evidence" value="ECO:0007669"/>
    <property type="project" value="UniProtKB-UniRule"/>
</dbReference>
<dbReference type="GO" id="GO:0050560">
    <property type="term" value="F:aspartate-tRNA(Asn) ligase activity"/>
    <property type="evidence" value="ECO:0007669"/>
    <property type="project" value="UniProtKB-EC"/>
</dbReference>
<dbReference type="GO" id="GO:0005524">
    <property type="term" value="F:ATP binding"/>
    <property type="evidence" value="ECO:0007669"/>
    <property type="project" value="UniProtKB-UniRule"/>
</dbReference>
<dbReference type="GO" id="GO:0140096">
    <property type="term" value="F:catalytic activity, acting on a protein"/>
    <property type="evidence" value="ECO:0007669"/>
    <property type="project" value="UniProtKB-ARBA"/>
</dbReference>
<dbReference type="GO" id="GO:0003676">
    <property type="term" value="F:nucleic acid binding"/>
    <property type="evidence" value="ECO:0007669"/>
    <property type="project" value="InterPro"/>
</dbReference>
<dbReference type="GO" id="GO:0016740">
    <property type="term" value="F:transferase activity"/>
    <property type="evidence" value="ECO:0007669"/>
    <property type="project" value="UniProtKB-ARBA"/>
</dbReference>
<dbReference type="GO" id="GO:0006422">
    <property type="term" value="P:aspartyl-tRNA aminoacylation"/>
    <property type="evidence" value="ECO:0007669"/>
    <property type="project" value="UniProtKB-UniRule"/>
</dbReference>
<dbReference type="CDD" id="cd00777">
    <property type="entry name" value="AspRS_core"/>
    <property type="match status" value="1"/>
</dbReference>
<dbReference type="CDD" id="cd04317">
    <property type="entry name" value="EcAspRS_like_N"/>
    <property type="match status" value="1"/>
</dbReference>
<dbReference type="Gene3D" id="3.30.930.10">
    <property type="entry name" value="Bira Bifunctional Protein, Domain 2"/>
    <property type="match status" value="1"/>
</dbReference>
<dbReference type="Gene3D" id="3.30.1360.30">
    <property type="entry name" value="GAD-like domain"/>
    <property type="match status" value="1"/>
</dbReference>
<dbReference type="Gene3D" id="2.40.50.140">
    <property type="entry name" value="Nucleic acid-binding proteins"/>
    <property type="match status" value="1"/>
</dbReference>
<dbReference type="HAMAP" id="MF_00044">
    <property type="entry name" value="Asp_tRNA_synth_type1"/>
    <property type="match status" value="1"/>
</dbReference>
<dbReference type="InterPro" id="IPR004364">
    <property type="entry name" value="Aa-tRNA-synt_II"/>
</dbReference>
<dbReference type="InterPro" id="IPR006195">
    <property type="entry name" value="aa-tRNA-synth_II"/>
</dbReference>
<dbReference type="InterPro" id="IPR045864">
    <property type="entry name" value="aa-tRNA-synth_II/BPL/LPL"/>
</dbReference>
<dbReference type="InterPro" id="IPR004524">
    <property type="entry name" value="Asp-tRNA-ligase_1"/>
</dbReference>
<dbReference type="InterPro" id="IPR047089">
    <property type="entry name" value="Asp-tRNA-ligase_1_N"/>
</dbReference>
<dbReference type="InterPro" id="IPR002312">
    <property type="entry name" value="Asp/Asn-tRNA-synth_IIb"/>
</dbReference>
<dbReference type="InterPro" id="IPR047090">
    <property type="entry name" value="AspRS_core"/>
</dbReference>
<dbReference type="InterPro" id="IPR004115">
    <property type="entry name" value="GAD-like_sf"/>
</dbReference>
<dbReference type="InterPro" id="IPR029351">
    <property type="entry name" value="GAD_dom"/>
</dbReference>
<dbReference type="InterPro" id="IPR012340">
    <property type="entry name" value="NA-bd_OB-fold"/>
</dbReference>
<dbReference type="InterPro" id="IPR004365">
    <property type="entry name" value="NA-bd_OB_tRNA"/>
</dbReference>
<dbReference type="NCBIfam" id="TIGR00459">
    <property type="entry name" value="aspS_bact"/>
    <property type="match status" value="1"/>
</dbReference>
<dbReference type="NCBIfam" id="NF001750">
    <property type="entry name" value="PRK00476.1"/>
    <property type="match status" value="1"/>
</dbReference>
<dbReference type="PANTHER" id="PTHR22594:SF5">
    <property type="entry name" value="ASPARTATE--TRNA LIGASE, MITOCHONDRIAL"/>
    <property type="match status" value="1"/>
</dbReference>
<dbReference type="PANTHER" id="PTHR22594">
    <property type="entry name" value="ASPARTYL/LYSYL-TRNA SYNTHETASE"/>
    <property type="match status" value="1"/>
</dbReference>
<dbReference type="Pfam" id="PF02938">
    <property type="entry name" value="GAD"/>
    <property type="match status" value="1"/>
</dbReference>
<dbReference type="Pfam" id="PF00152">
    <property type="entry name" value="tRNA-synt_2"/>
    <property type="match status" value="1"/>
</dbReference>
<dbReference type="Pfam" id="PF01336">
    <property type="entry name" value="tRNA_anti-codon"/>
    <property type="match status" value="1"/>
</dbReference>
<dbReference type="PRINTS" id="PR01042">
    <property type="entry name" value="TRNASYNTHASP"/>
</dbReference>
<dbReference type="SUPFAM" id="SSF55681">
    <property type="entry name" value="Class II aaRS and biotin synthetases"/>
    <property type="match status" value="1"/>
</dbReference>
<dbReference type="SUPFAM" id="SSF55261">
    <property type="entry name" value="GAD domain-like"/>
    <property type="match status" value="1"/>
</dbReference>
<dbReference type="SUPFAM" id="SSF50249">
    <property type="entry name" value="Nucleic acid-binding proteins"/>
    <property type="match status" value="1"/>
</dbReference>
<dbReference type="PROSITE" id="PS50862">
    <property type="entry name" value="AA_TRNA_LIGASE_II"/>
    <property type="match status" value="1"/>
</dbReference>
<proteinExistence type="inferred from homology"/>
<gene>
    <name evidence="1" type="primary">aspS</name>
    <name type="ordered locus">CHY_2204</name>
</gene>
<keyword id="KW-0030">Aminoacyl-tRNA synthetase</keyword>
<keyword id="KW-0067">ATP-binding</keyword>
<keyword id="KW-0963">Cytoplasm</keyword>
<keyword id="KW-0436">Ligase</keyword>
<keyword id="KW-0547">Nucleotide-binding</keyword>
<keyword id="KW-0648">Protein biosynthesis</keyword>
<keyword id="KW-1185">Reference proteome</keyword>
<protein>
    <recommendedName>
        <fullName evidence="1">Aspartate--tRNA(Asp/Asn) ligase</fullName>
        <ecNumber evidence="1">6.1.1.23</ecNumber>
    </recommendedName>
    <alternativeName>
        <fullName evidence="1">Aspartyl-tRNA synthetase</fullName>
        <shortName evidence="1">AspRS</shortName>
    </alternativeName>
    <alternativeName>
        <fullName evidence="1">Non-discriminating aspartyl-tRNA synthetase</fullName>
        <shortName evidence="1">ND-AspRS</shortName>
    </alternativeName>
</protein>
<sequence length="592" mass="67744">MLKRSHYCGELRKEHAGQKVILNGWVQRRRDHGGLIFVDLRDRSGIVQVVFSPDVDLEAFRVAEAVRNEYVLAIEGTVRLRPEGTENPNLLTGEVEVYASKVEVLNKAKTPPFYIEDGIDVDEQVRLRYRYLDLRRPEMQRALELRHKAAKAVRDFLDRHGFWEIETPMLTKSTPEGARDFLVPSRLNPGKFYALPQSPQIFKQILMVAGMERYFQIVRCFRDEDLRADRQPEFTQIDIEMSFIDREDIMSLMEEMIAYVFKEAIGVEVKTPFKRISYQEAMLKYGTDKPDLRFGLEITDVTELVKDVEFKVFQTVAHAGGVIRGLNAKGCAGFSRKDLDDLTKFVGNFGAKGLAYLILTPEEVKSPIAKFFKEEELRALINALQGEPGDILFFVADKPEVAAQALGNLRLHLAERLGLIPENEFNFLWVIDFPLLEYDNEEKRFVAMHHPFTAPMDEDLPLMDENPLLVRAKAYDMVLNGVEIGGGSIRIHRRDIQEKMFKLIGLSEEEAKEKFGFMLEAFEYGTPPHGGIAFGFDRLVMLMAGRESIRDVIAFPKTQSATDLMVGAPNVVERRQLKELHIKVDLPVKEQQ</sequence>
<feature type="chain" id="PRO_0000235516" description="Aspartate--tRNA(Asp/Asn) ligase">
    <location>
        <begin position="1"/>
        <end position="592"/>
    </location>
</feature>
<feature type="region of interest" description="Aspartate" evidence="1">
    <location>
        <begin position="200"/>
        <end position="203"/>
    </location>
</feature>
<feature type="binding site" evidence="1">
    <location>
        <position position="176"/>
    </location>
    <ligand>
        <name>L-aspartate</name>
        <dbReference type="ChEBI" id="CHEBI:29991"/>
    </ligand>
</feature>
<feature type="binding site" evidence="1">
    <location>
        <begin position="222"/>
        <end position="224"/>
    </location>
    <ligand>
        <name>ATP</name>
        <dbReference type="ChEBI" id="CHEBI:30616"/>
    </ligand>
</feature>
<feature type="binding site" evidence="1">
    <location>
        <position position="222"/>
    </location>
    <ligand>
        <name>L-aspartate</name>
        <dbReference type="ChEBI" id="CHEBI:29991"/>
    </ligand>
</feature>
<feature type="binding site" evidence="1">
    <location>
        <position position="231"/>
    </location>
    <ligand>
        <name>ATP</name>
        <dbReference type="ChEBI" id="CHEBI:30616"/>
    </ligand>
</feature>
<feature type="binding site" evidence="1">
    <location>
        <position position="449"/>
    </location>
    <ligand>
        <name>L-aspartate</name>
        <dbReference type="ChEBI" id="CHEBI:29991"/>
    </ligand>
</feature>
<feature type="binding site" evidence="1">
    <location>
        <position position="483"/>
    </location>
    <ligand>
        <name>ATP</name>
        <dbReference type="ChEBI" id="CHEBI:30616"/>
    </ligand>
</feature>
<feature type="binding site" evidence="1">
    <location>
        <position position="490"/>
    </location>
    <ligand>
        <name>L-aspartate</name>
        <dbReference type="ChEBI" id="CHEBI:29991"/>
    </ligand>
</feature>
<feature type="binding site" evidence="1">
    <location>
        <begin position="535"/>
        <end position="538"/>
    </location>
    <ligand>
        <name>ATP</name>
        <dbReference type="ChEBI" id="CHEBI:30616"/>
    </ligand>
</feature>
<feature type="site" description="Important for tRNA non-discrimination" evidence="1">
    <location>
        <position position="32"/>
    </location>
</feature>
<feature type="site" description="Important for tRNA non-discrimination" evidence="1">
    <location>
        <position position="84"/>
    </location>
</feature>
<comment type="function">
    <text evidence="1">Aspartyl-tRNA synthetase with relaxed tRNA specificity since it is able to aspartylate not only its cognate tRNA(Asp) but also tRNA(Asn). Reaction proceeds in two steps: L-aspartate is first activated by ATP to form Asp-AMP and then transferred to the acceptor end of tRNA(Asp/Asn).</text>
</comment>
<comment type="catalytic activity">
    <reaction evidence="1">
        <text>tRNA(Asx) + L-aspartate + ATP = L-aspartyl-tRNA(Asx) + AMP + diphosphate</text>
        <dbReference type="Rhea" id="RHEA:18349"/>
        <dbReference type="Rhea" id="RHEA-COMP:9710"/>
        <dbReference type="Rhea" id="RHEA-COMP:9711"/>
        <dbReference type="ChEBI" id="CHEBI:29991"/>
        <dbReference type="ChEBI" id="CHEBI:30616"/>
        <dbReference type="ChEBI" id="CHEBI:33019"/>
        <dbReference type="ChEBI" id="CHEBI:78442"/>
        <dbReference type="ChEBI" id="CHEBI:78516"/>
        <dbReference type="ChEBI" id="CHEBI:456215"/>
        <dbReference type="EC" id="6.1.1.23"/>
    </reaction>
</comment>
<comment type="subunit">
    <text evidence="1">Homodimer.</text>
</comment>
<comment type="subcellular location">
    <subcellularLocation>
        <location evidence="1">Cytoplasm</location>
    </subcellularLocation>
</comment>
<comment type="similarity">
    <text evidence="1">Belongs to the class-II aminoacyl-tRNA synthetase family. Type 1 subfamily.</text>
</comment>
<reference key="1">
    <citation type="journal article" date="2005" name="PLoS Genet.">
        <title>Life in hot carbon monoxide: the complete genome sequence of Carboxydothermus hydrogenoformans Z-2901.</title>
        <authorList>
            <person name="Wu M."/>
            <person name="Ren Q."/>
            <person name="Durkin A.S."/>
            <person name="Daugherty S.C."/>
            <person name="Brinkac L.M."/>
            <person name="Dodson R.J."/>
            <person name="Madupu R."/>
            <person name="Sullivan S.A."/>
            <person name="Kolonay J.F."/>
            <person name="Nelson W.C."/>
            <person name="Tallon L.J."/>
            <person name="Jones K.M."/>
            <person name="Ulrich L.E."/>
            <person name="Gonzalez J.M."/>
            <person name="Zhulin I.B."/>
            <person name="Robb F.T."/>
            <person name="Eisen J.A."/>
        </authorList>
    </citation>
    <scope>NUCLEOTIDE SEQUENCE [LARGE SCALE GENOMIC DNA]</scope>
    <source>
        <strain>ATCC BAA-161 / DSM 6008 / Z-2901</strain>
    </source>
</reference>
<name>SYDND_CARHZ</name>
<accession>Q3AA17</accession>